<reference key="1">
    <citation type="journal article" date="2009" name="Science">
        <title>The genome sequence of taurine cattle: a window to ruminant biology and evolution.</title>
        <authorList>
            <consortium name="The bovine genome sequencing and analysis consortium"/>
        </authorList>
    </citation>
    <scope>NUCLEOTIDE SEQUENCE [LARGE SCALE GENOMIC DNA]</scope>
    <source>
        <strain>Hereford</strain>
    </source>
</reference>
<reference key="2">
    <citation type="journal article" date="1992" name="J. Biol. Chem.">
        <title>COMP (cartilage oligomeric matrix protein) is structurally related to the thrombospondins.</title>
        <authorList>
            <person name="Oldberg A."/>
            <person name="Antonsson P."/>
            <person name="Lindblom K."/>
            <person name="Heinegaard D."/>
        </authorList>
    </citation>
    <scope>NUCLEOTIDE SEQUENCE [MRNA] OF 318-756</scope>
    <source>
        <tissue>Cartilage</tissue>
    </source>
</reference>
<reference key="3">
    <citation type="journal article" date="2004" name="J. Biol. Chem.">
        <title>Interactions between the cartilage oligomeric matrix protein and matrilins. Implications for matrix assembly and the pathogenesis of chondrodysplasias.</title>
        <authorList>
            <person name="Mann H.H."/>
            <person name="Oezbek S."/>
            <person name="Engel J."/>
            <person name="Paulsson M."/>
            <person name="Wagener R."/>
        </authorList>
    </citation>
    <scope>INTERACTION WITH MATN1</scope>
</reference>
<sequence>MVLAAARVLLLTLAALGASGQGQMPLGGDLGPQMLRELQETNAALQDVRDLLRQQVKEITFLKNTVMECDACGMQPARTPKLTVRPLSQCSPGFCFPGVACTETANGARCGPCPEGFTGNGSHCADVNECTAHPCFPRVRCINTSPGFRCEACPPGFSGPTHEGVGLAFAKANKQVCTDINECETGQHNCVPNSVCVNTVGSFQCGPCQPGFVGDQASGCRRRPQRFCPDGTPSPCHEKADCVLERDGSRSCVCAVGWAGNGLICGRDTDLDGFPDEKLRCSERQCRKDNCVTVPNSGQEDVDQDGIGDACDPDADGDGVLNEKDNCPLVRNPDQRNTDGDKWGDACDNCRSQKNDDQKDTDKDGRGDACDDDIDGDRIRNPVDNCPKVPNSDQKDTDGDGVGDACDNCPQKSNADQRDVDHDFVGDACDSDQDQDGDGHQDSKDNCPTVPNSAQQDSDHDGQGDACDDDDDNDGVPDSRDNCRLVPNPGQEDMDRDGVGDACQGDFDADKVVDKIDVCPENAEVTLTDFRAFQTVVLDPEGDAQIDPNWVVLNQGMEIVQTMNSDPGLAVGYTAFNGVDFEGTFHVNTATDDDYAGFIFGYQDSSSFYVVMWKQMEQTYWQANPFRAVAEPGIQLKAVKSSTGPGEQLRNALWHTGDTASQVRLLWKDPRNVGWKDKTSYRWFLQHRPQVGYIRVRFYEGPELVADSNVILDTTMRGGRLGVFCFSQENIIWANLRYRCNDTIPEDYEAQRLLQA</sequence>
<gene>
    <name type="primary">COMP</name>
</gene>
<evidence type="ECO:0000250" key="1"/>
<evidence type="ECO:0000250" key="2">
    <source>
        <dbReference type="UniProtKB" id="P35444"/>
    </source>
</evidence>
<evidence type="ECO:0000250" key="3">
    <source>
        <dbReference type="UniProtKB" id="P49747"/>
    </source>
</evidence>
<evidence type="ECO:0000255" key="4"/>
<evidence type="ECO:0000255" key="5">
    <source>
        <dbReference type="PROSITE-ProRule" id="PRU00076"/>
    </source>
</evidence>
<evidence type="ECO:0000255" key="6">
    <source>
        <dbReference type="PROSITE-ProRule" id="PRU00635"/>
    </source>
</evidence>
<evidence type="ECO:0000256" key="7">
    <source>
        <dbReference type="SAM" id="MobiDB-lite"/>
    </source>
</evidence>
<evidence type="ECO:0000269" key="8">
    <source>
    </source>
</evidence>
<evidence type="ECO:0000305" key="9"/>
<accession>P35445</accession>
<keyword id="KW-0053">Apoptosis</keyword>
<keyword id="KW-0106">Calcium</keyword>
<keyword id="KW-0130">Cell adhesion</keyword>
<keyword id="KW-1015">Disulfide bond</keyword>
<keyword id="KW-0245">EGF-like domain</keyword>
<keyword id="KW-0272">Extracellular matrix</keyword>
<keyword id="KW-0325">Glycoprotein</keyword>
<keyword id="KW-0358">Heparin-binding</keyword>
<keyword id="KW-1185">Reference proteome</keyword>
<keyword id="KW-0677">Repeat</keyword>
<keyword id="KW-0964">Secreted</keyword>
<keyword id="KW-0732">Signal</keyword>
<dbReference type="EMBL" id="X74326">
    <property type="protein sequence ID" value="CAA52374.1"/>
    <property type="molecule type" value="mRNA"/>
</dbReference>
<dbReference type="PIR" id="B44315">
    <property type="entry name" value="B44315"/>
</dbReference>
<dbReference type="RefSeq" id="NP_001159989.2">
    <property type="nucleotide sequence ID" value="NM_001166517.2"/>
</dbReference>
<dbReference type="SMR" id="P35445"/>
<dbReference type="FunCoup" id="P35445">
    <property type="interactions" value="105"/>
</dbReference>
<dbReference type="IntAct" id="P35445">
    <property type="interactions" value="1"/>
</dbReference>
<dbReference type="MINT" id="P35445"/>
<dbReference type="STRING" id="9913.ENSBTAP00000006074"/>
<dbReference type="GlyCosmos" id="P35445">
    <property type="glycosylation" value="2 sites, No reported glycans"/>
</dbReference>
<dbReference type="GlyGen" id="P35445">
    <property type="glycosylation" value="2 sites"/>
</dbReference>
<dbReference type="PeptideAtlas" id="P35445"/>
<dbReference type="Ensembl" id="ENSBTAT00000006074.6">
    <property type="protein sequence ID" value="ENSBTAP00000006074.6"/>
    <property type="gene ID" value="ENSBTAG00000004630.7"/>
</dbReference>
<dbReference type="GeneID" id="281088"/>
<dbReference type="VEuPathDB" id="HostDB:ENSBTAG00000004630"/>
<dbReference type="VGNC" id="VGNC:27590">
    <property type="gene designation" value="COMP"/>
</dbReference>
<dbReference type="eggNOG" id="ENOG502QRK8">
    <property type="taxonomic scope" value="Eukaryota"/>
</dbReference>
<dbReference type="GeneTree" id="ENSGT00940000162169"/>
<dbReference type="InParanoid" id="P35445"/>
<dbReference type="OMA" id="DSCPFIS"/>
<dbReference type="OrthoDB" id="14563at2759"/>
<dbReference type="Reactome" id="R-BTA-216083">
    <property type="pathway name" value="Integrin cell surface interactions"/>
</dbReference>
<dbReference type="Reactome" id="R-BTA-3000178">
    <property type="pathway name" value="ECM proteoglycans"/>
</dbReference>
<dbReference type="Proteomes" id="UP000009136">
    <property type="component" value="Chromosome 7"/>
</dbReference>
<dbReference type="Bgee" id="ENSBTAG00000004630">
    <property type="expression patterns" value="Expressed in laryngeal cartilage and 52 other cell types or tissues"/>
</dbReference>
<dbReference type="GO" id="GO:0062023">
    <property type="term" value="C:collagen-containing extracellular matrix"/>
    <property type="evidence" value="ECO:0000318"/>
    <property type="project" value="GO_Central"/>
</dbReference>
<dbReference type="GO" id="GO:0005576">
    <property type="term" value="C:extracellular region"/>
    <property type="evidence" value="ECO:0000250"/>
    <property type="project" value="UniProtKB"/>
</dbReference>
<dbReference type="GO" id="GO:0005615">
    <property type="term" value="C:extracellular space"/>
    <property type="evidence" value="ECO:0007669"/>
    <property type="project" value="Ensembl"/>
</dbReference>
<dbReference type="GO" id="GO:0032991">
    <property type="term" value="C:protein-containing complex"/>
    <property type="evidence" value="ECO:0007669"/>
    <property type="project" value="Ensembl"/>
</dbReference>
<dbReference type="GO" id="GO:0036122">
    <property type="term" value="F:BMP binding"/>
    <property type="evidence" value="ECO:0007669"/>
    <property type="project" value="Ensembl"/>
</dbReference>
<dbReference type="GO" id="GO:0005509">
    <property type="term" value="F:calcium ion binding"/>
    <property type="evidence" value="ECO:0007669"/>
    <property type="project" value="Ensembl"/>
</dbReference>
<dbReference type="GO" id="GO:0005518">
    <property type="term" value="F:collagen binding"/>
    <property type="evidence" value="ECO:0007669"/>
    <property type="project" value="Ensembl"/>
</dbReference>
<dbReference type="GO" id="GO:0043395">
    <property type="term" value="F:heparan sulfate proteoglycan binding"/>
    <property type="evidence" value="ECO:0007669"/>
    <property type="project" value="Ensembl"/>
</dbReference>
<dbReference type="GO" id="GO:0008201">
    <property type="term" value="F:heparin binding"/>
    <property type="evidence" value="ECO:0007669"/>
    <property type="project" value="UniProtKB-KW"/>
</dbReference>
<dbReference type="GO" id="GO:0005178">
    <property type="term" value="F:integrin binding"/>
    <property type="evidence" value="ECO:0007669"/>
    <property type="project" value="Ensembl"/>
</dbReference>
<dbReference type="GO" id="GO:0002020">
    <property type="term" value="F:protease binding"/>
    <property type="evidence" value="ECO:0007669"/>
    <property type="project" value="Ensembl"/>
</dbReference>
<dbReference type="GO" id="GO:0006915">
    <property type="term" value="P:apoptotic process"/>
    <property type="evidence" value="ECO:0007669"/>
    <property type="project" value="UniProtKB-KW"/>
</dbReference>
<dbReference type="GO" id="GO:0048844">
    <property type="term" value="P:artery morphogenesis"/>
    <property type="evidence" value="ECO:0007669"/>
    <property type="project" value="Ensembl"/>
</dbReference>
<dbReference type="GO" id="GO:0030509">
    <property type="term" value="P:BMP signaling pathway"/>
    <property type="evidence" value="ECO:0007669"/>
    <property type="project" value="Ensembl"/>
</dbReference>
<dbReference type="GO" id="GO:0030282">
    <property type="term" value="P:bone mineralization"/>
    <property type="evidence" value="ECO:0007669"/>
    <property type="project" value="Ensembl"/>
</dbReference>
<dbReference type="GO" id="GO:1990079">
    <property type="term" value="P:cartilage homeostasis"/>
    <property type="evidence" value="ECO:0000250"/>
    <property type="project" value="UniProtKB"/>
</dbReference>
<dbReference type="GO" id="GO:0090398">
    <property type="term" value="P:cellular senescence"/>
    <property type="evidence" value="ECO:0007669"/>
    <property type="project" value="Ensembl"/>
</dbReference>
<dbReference type="GO" id="GO:0002063">
    <property type="term" value="P:chondrocyte development"/>
    <property type="evidence" value="ECO:0007669"/>
    <property type="project" value="Ensembl"/>
</dbReference>
<dbReference type="GO" id="GO:0035988">
    <property type="term" value="P:chondrocyte proliferation"/>
    <property type="evidence" value="ECO:0007669"/>
    <property type="project" value="Ensembl"/>
</dbReference>
<dbReference type="GO" id="GO:0030199">
    <property type="term" value="P:collagen fibril organization"/>
    <property type="evidence" value="ECO:0007669"/>
    <property type="project" value="Ensembl"/>
</dbReference>
<dbReference type="GO" id="GO:0003417">
    <property type="term" value="P:growth plate cartilage development"/>
    <property type="evidence" value="ECO:0007669"/>
    <property type="project" value="Ensembl"/>
</dbReference>
<dbReference type="GO" id="GO:0060173">
    <property type="term" value="P:limb development"/>
    <property type="evidence" value="ECO:0007669"/>
    <property type="project" value="Ensembl"/>
</dbReference>
<dbReference type="GO" id="GO:0035264">
    <property type="term" value="P:multicellular organism growth"/>
    <property type="evidence" value="ECO:0007669"/>
    <property type="project" value="Ensembl"/>
</dbReference>
<dbReference type="GO" id="GO:0050881">
    <property type="term" value="P:musculoskeletal movement"/>
    <property type="evidence" value="ECO:0007669"/>
    <property type="project" value="Ensembl"/>
</dbReference>
<dbReference type="GO" id="GO:0043066">
    <property type="term" value="P:negative regulation of apoptotic process"/>
    <property type="evidence" value="ECO:0007669"/>
    <property type="project" value="Ensembl"/>
</dbReference>
<dbReference type="GO" id="GO:1900047">
    <property type="term" value="P:negative regulation of hemostasis"/>
    <property type="evidence" value="ECO:0007669"/>
    <property type="project" value="Ensembl"/>
</dbReference>
<dbReference type="GO" id="GO:0070527">
    <property type="term" value="P:platelet aggregation"/>
    <property type="evidence" value="ECO:0007669"/>
    <property type="project" value="Ensembl"/>
</dbReference>
<dbReference type="GO" id="GO:1902732">
    <property type="term" value="P:positive regulation of chondrocyte proliferation"/>
    <property type="evidence" value="ECO:0007669"/>
    <property type="project" value="Ensembl"/>
</dbReference>
<dbReference type="GO" id="GO:0051260">
    <property type="term" value="P:protein homooligomerization"/>
    <property type="evidence" value="ECO:0000250"/>
    <property type="project" value="UniProtKB"/>
</dbReference>
<dbReference type="GO" id="GO:0016485">
    <property type="term" value="P:protein processing"/>
    <property type="evidence" value="ECO:0007669"/>
    <property type="project" value="Ensembl"/>
</dbReference>
<dbReference type="GO" id="GO:0009306">
    <property type="term" value="P:protein secretion"/>
    <property type="evidence" value="ECO:0007669"/>
    <property type="project" value="Ensembl"/>
</dbReference>
<dbReference type="GO" id="GO:0030500">
    <property type="term" value="P:regulation of bone mineralization"/>
    <property type="evidence" value="ECO:0007669"/>
    <property type="project" value="Ensembl"/>
</dbReference>
<dbReference type="GO" id="GO:0010468">
    <property type="term" value="P:regulation of gene expression"/>
    <property type="evidence" value="ECO:0007669"/>
    <property type="project" value="Ensembl"/>
</dbReference>
<dbReference type="GO" id="GO:0006986">
    <property type="term" value="P:response to unfolded protein"/>
    <property type="evidence" value="ECO:0007669"/>
    <property type="project" value="Ensembl"/>
</dbReference>
<dbReference type="GO" id="GO:0043588">
    <property type="term" value="P:skin development"/>
    <property type="evidence" value="ECO:0007669"/>
    <property type="project" value="Ensembl"/>
</dbReference>
<dbReference type="GO" id="GO:0035989">
    <property type="term" value="P:tendon development"/>
    <property type="evidence" value="ECO:0007669"/>
    <property type="project" value="Ensembl"/>
</dbReference>
<dbReference type="GO" id="GO:0097084">
    <property type="term" value="P:vascular associated smooth muscle cell development"/>
    <property type="evidence" value="ECO:0007669"/>
    <property type="project" value="Ensembl"/>
</dbReference>
<dbReference type="GO" id="GO:0014829">
    <property type="term" value="P:vascular associated smooth muscle contraction"/>
    <property type="evidence" value="ECO:0007669"/>
    <property type="project" value="Ensembl"/>
</dbReference>
<dbReference type="CDD" id="cd00054">
    <property type="entry name" value="EGF_CA"/>
    <property type="match status" value="2"/>
</dbReference>
<dbReference type="CDD" id="cd16077">
    <property type="entry name" value="TSP-5cc"/>
    <property type="match status" value="1"/>
</dbReference>
<dbReference type="FunFam" id="2.10.25.10:FF:000346">
    <property type="entry name" value="Cartilage oligomeric matrix protein"/>
    <property type="match status" value="1"/>
</dbReference>
<dbReference type="FunFam" id="4.10.1080.10:FF:000004">
    <property type="entry name" value="Cartilage oligomeric matrix protein"/>
    <property type="match status" value="1"/>
</dbReference>
<dbReference type="FunFam" id="2.10.25.10:FF:000025">
    <property type="entry name" value="Thrombospondin 3"/>
    <property type="match status" value="1"/>
</dbReference>
<dbReference type="FunFam" id="2.10.25.10:FF:000027">
    <property type="entry name" value="Thrombospondin 3"/>
    <property type="match status" value="1"/>
</dbReference>
<dbReference type="FunFam" id="2.60.120.200:FF:000002">
    <property type="entry name" value="Thrombospondin 3"/>
    <property type="match status" value="1"/>
</dbReference>
<dbReference type="FunFam" id="4.10.1080.10:FF:000001">
    <property type="entry name" value="Thrombospondin 3"/>
    <property type="match status" value="1"/>
</dbReference>
<dbReference type="FunFam" id="2.10.25.10:FF:000170">
    <property type="entry name" value="thrombospondin-3 isoform X1"/>
    <property type="match status" value="1"/>
</dbReference>
<dbReference type="FunFam" id="1.20.5.10:FF:000001">
    <property type="entry name" value="thrombospondin-3 isoform X2"/>
    <property type="match status" value="1"/>
</dbReference>
<dbReference type="Gene3D" id="1.20.5.10">
    <property type="match status" value="1"/>
</dbReference>
<dbReference type="Gene3D" id="2.60.120.200">
    <property type="match status" value="1"/>
</dbReference>
<dbReference type="Gene3D" id="2.10.25.10">
    <property type="entry name" value="Laminin"/>
    <property type="match status" value="3"/>
</dbReference>
<dbReference type="Gene3D" id="4.10.1080.10">
    <property type="entry name" value="TSP type-3 repeat"/>
    <property type="match status" value="3"/>
</dbReference>
<dbReference type="InterPro" id="IPR013320">
    <property type="entry name" value="ConA-like_dom_sf"/>
</dbReference>
<dbReference type="InterPro" id="IPR001881">
    <property type="entry name" value="EGF-like_Ca-bd_dom"/>
</dbReference>
<dbReference type="InterPro" id="IPR000742">
    <property type="entry name" value="EGF-like_dom"/>
</dbReference>
<dbReference type="InterPro" id="IPR018097">
    <property type="entry name" value="EGF_Ca-bd_CS"/>
</dbReference>
<dbReference type="InterPro" id="IPR049883">
    <property type="entry name" value="NOTCH1_EGF-like"/>
</dbReference>
<dbReference type="InterPro" id="IPR003367">
    <property type="entry name" value="Thrombospondin_3-like_rpt"/>
</dbReference>
<dbReference type="InterPro" id="IPR017897">
    <property type="entry name" value="Thrombospondin_3_rpt"/>
</dbReference>
<dbReference type="InterPro" id="IPR008859">
    <property type="entry name" value="Thrombospondin_C"/>
</dbReference>
<dbReference type="InterPro" id="IPR039081">
    <property type="entry name" value="TSP-5_cc"/>
</dbReference>
<dbReference type="InterPro" id="IPR024665">
    <property type="entry name" value="TSP/COMP_coiled-coil"/>
</dbReference>
<dbReference type="InterPro" id="IPR046970">
    <property type="entry name" value="TSP/COMP_coiled-coil_sf"/>
</dbReference>
<dbReference type="InterPro" id="IPR028974">
    <property type="entry name" value="TSP_type-3_rpt"/>
</dbReference>
<dbReference type="PANTHER" id="PTHR10199:SF88">
    <property type="entry name" value="CARTILAGE OLIGOMERIC MATRIX PROTEIN"/>
    <property type="match status" value="1"/>
</dbReference>
<dbReference type="PANTHER" id="PTHR10199">
    <property type="entry name" value="THROMBOSPONDIN"/>
    <property type="match status" value="1"/>
</dbReference>
<dbReference type="Pfam" id="PF11598">
    <property type="entry name" value="COMP"/>
    <property type="match status" value="1"/>
</dbReference>
<dbReference type="Pfam" id="PF07645">
    <property type="entry name" value="EGF_CA"/>
    <property type="match status" value="2"/>
</dbReference>
<dbReference type="Pfam" id="PF02412">
    <property type="entry name" value="TSP_3"/>
    <property type="match status" value="5"/>
</dbReference>
<dbReference type="Pfam" id="PF05735">
    <property type="entry name" value="TSP_C"/>
    <property type="match status" value="1"/>
</dbReference>
<dbReference type="SMART" id="SM00181">
    <property type="entry name" value="EGF"/>
    <property type="match status" value="4"/>
</dbReference>
<dbReference type="SMART" id="SM00179">
    <property type="entry name" value="EGF_CA"/>
    <property type="match status" value="2"/>
</dbReference>
<dbReference type="SUPFAM" id="SSF58006">
    <property type="entry name" value="Assembly domain of cartilage oligomeric matrix protein"/>
    <property type="match status" value="1"/>
</dbReference>
<dbReference type="SUPFAM" id="SSF49899">
    <property type="entry name" value="Concanavalin A-like lectins/glucanases"/>
    <property type="match status" value="1"/>
</dbReference>
<dbReference type="SUPFAM" id="SSF57196">
    <property type="entry name" value="EGF/Laminin"/>
    <property type="match status" value="2"/>
</dbReference>
<dbReference type="SUPFAM" id="SSF103647">
    <property type="entry name" value="TSP type-3 repeat"/>
    <property type="match status" value="3"/>
</dbReference>
<dbReference type="PROSITE" id="PS01186">
    <property type="entry name" value="EGF_2"/>
    <property type="match status" value="1"/>
</dbReference>
<dbReference type="PROSITE" id="PS50026">
    <property type="entry name" value="EGF_3"/>
    <property type="match status" value="3"/>
</dbReference>
<dbReference type="PROSITE" id="PS01187">
    <property type="entry name" value="EGF_CA"/>
    <property type="match status" value="2"/>
</dbReference>
<dbReference type="PROSITE" id="PS51234">
    <property type="entry name" value="TSP3"/>
    <property type="match status" value="8"/>
</dbReference>
<dbReference type="PROSITE" id="PS51236">
    <property type="entry name" value="TSP_CTER"/>
    <property type="match status" value="1"/>
</dbReference>
<protein>
    <recommendedName>
        <fullName>Cartilage oligomeric matrix protein</fullName>
        <shortName>COMP</shortName>
    </recommendedName>
</protein>
<comment type="function">
    <text evidence="2 3">Plays a role in the structural integrity of cartilage via its interaction with other extracellular matrix proteins such as the collagens and fibronectin. Can mediate the interaction of chondrocytes with the cartilage extracellular matrix through interaction with cell surface integrin receptors. Could play a role in the pathogenesis of osteoarthritis. Potent suppressor of apoptosis in both primary chondrocytes and transformed cells. Suppresses apoptosis by blocking the activation of caspase-3 and by inducing the IAP family of survival proteins (BIRC3, BIRC2, BIRC5 and XIAP) (By similarity). Essential for maintaining a vascular smooth muscle cells (VSMCs) contractile/differentiated phenotype under physiological and pathological stimuli. Maintains this phenotype of VSMCs by interacting with ITGA7 (By similarity).</text>
</comment>
<comment type="cofactor">
    <cofactor evidence="3">
        <name>Ca(2+)</name>
        <dbReference type="ChEBI" id="CHEBI:29108"/>
    </cofactor>
    <text evidence="3">Binds 11-14 calcium ions per subunit.</text>
</comment>
<comment type="subunit">
    <text evidence="2 3 8">Pentamer; disulfide-linked. Exists in a more compact conformation in the presence of calcium and shows a more extended conformation in the absence of calcium. Interacts with ITGB3, ITGA5 and FN1. Binding to FN1 requires the presence of divalent cations (Ca(2+), Mg(2+) or Mn(2+)). The greatest amount of binding is seen in the presence of Mn(2+). Interacts with MATN1, MATN3, MATN4 and ACAN (By similarity) (PubMed:15075323). Binds heparin, heparan sulfate and chondroitin sulfate. EDTA dimishes significantly its binding to ACAN and abolishes its binding to MATN3, MATN4 and chondroitin sulfate. Interacts with collagen I, II and IX, and interaction with these collagens is dependent on the presence of zinc ions. Interacts with ADAMTS12 (By similarity). Interacts with ITGA7 (By similarity).</text>
</comment>
<comment type="subcellular location">
    <subcellularLocation>
        <location evidence="3">Secreted</location>
        <location evidence="3">Extracellular space</location>
        <location evidence="3">Extracellular matrix</location>
    </subcellularLocation>
</comment>
<comment type="domain">
    <text evidence="3">The cell attachment motif mediates the attachment to chondrocytes. It mediates the induction of both the IAP family of survival proteins and the antiapoptotic response.</text>
</comment>
<comment type="domain">
    <text evidence="3">The TSP C-terminal domain mediates interaction with FN1 and ACAN.</text>
</comment>
<comment type="domain">
    <text evidence="3">Each of the eight TSP type-3 repeats binds two calcium ions. The TSP C-terminal domain binds three calcium ions.</text>
</comment>
<comment type="PTM">
    <text evidence="3">Proteolytically cleaved by metalloproteases ADAMTS4 and ADAMTS1 with ADAMTS4 showing more potent activity.</text>
</comment>
<comment type="similarity">
    <text evidence="9">Belongs to the thrombospondin family.</text>
</comment>
<proteinExistence type="evidence at protein level"/>
<feature type="signal peptide" evidence="4">
    <location>
        <begin position="1"/>
        <end position="20"/>
    </location>
</feature>
<feature type="chain" id="PRO_0000186460" description="Cartilage oligomeric matrix protein">
    <location>
        <begin position="21"/>
        <end position="756"/>
    </location>
</feature>
<feature type="domain" description="EGF-like 1" evidence="5">
    <location>
        <begin position="86"/>
        <end position="125"/>
    </location>
</feature>
<feature type="domain" description="EGF-like 2; calcium-binding" evidence="5">
    <location>
        <begin position="126"/>
        <end position="178"/>
    </location>
</feature>
<feature type="domain" description="EGF-like 3; calcium-binding" evidence="5">
    <location>
        <begin position="179"/>
        <end position="218"/>
    </location>
</feature>
<feature type="domain" description="EGF-like 4" evidence="5">
    <location>
        <begin position="224"/>
        <end position="266"/>
    </location>
</feature>
<feature type="repeat" description="TSP type-3 1">
    <location>
        <begin position="267"/>
        <end position="299"/>
    </location>
</feature>
<feature type="repeat" description="TSP type-3 2">
    <location>
        <begin position="300"/>
        <end position="335"/>
    </location>
</feature>
<feature type="repeat" description="TSP type-3 3">
    <location>
        <begin position="336"/>
        <end position="358"/>
    </location>
</feature>
<feature type="repeat" description="TSP type-3 4">
    <location>
        <begin position="359"/>
        <end position="394"/>
    </location>
</feature>
<feature type="repeat" description="TSP type-3 5">
    <location>
        <begin position="395"/>
        <end position="417"/>
    </location>
</feature>
<feature type="repeat" description="TSP type-3 6">
    <location>
        <begin position="418"/>
        <end position="455"/>
    </location>
</feature>
<feature type="repeat" description="TSP type-3 7">
    <location>
        <begin position="456"/>
        <end position="491"/>
    </location>
</feature>
<feature type="repeat" description="TSP type-3 8">
    <location>
        <begin position="492"/>
        <end position="527"/>
    </location>
</feature>
<feature type="domain" description="TSP C-terminal" evidence="6">
    <location>
        <begin position="531"/>
        <end position="745"/>
    </location>
</feature>
<feature type="region of interest" description="COMP N-terminal">
    <location>
        <begin position="22"/>
        <end position="85"/>
    </location>
</feature>
<feature type="region of interest" description="Disordered" evidence="7">
    <location>
        <begin position="322"/>
        <end position="502"/>
    </location>
</feature>
<feature type="region of interest" description="Mediates cell survival and induction of the IAP family of survival proteins" evidence="1">
    <location>
        <begin position="526"/>
        <end position="756"/>
    </location>
</feature>
<feature type="short sequence motif" description="Cell attachment site" evidence="4">
    <location>
        <begin position="366"/>
        <end position="368"/>
    </location>
</feature>
<feature type="compositionally biased region" description="Basic and acidic residues" evidence="7">
    <location>
        <begin position="333"/>
        <end position="345"/>
    </location>
</feature>
<feature type="compositionally biased region" description="Basic and acidic residues" evidence="7">
    <location>
        <begin position="351"/>
        <end position="369"/>
    </location>
</feature>
<feature type="compositionally biased region" description="Basic and acidic residues" evidence="7">
    <location>
        <begin position="415"/>
        <end position="425"/>
    </location>
</feature>
<feature type="compositionally biased region" description="Acidic residues" evidence="7">
    <location>
        <begin position="466"/>
        <end position="475"/>
    </location>
</feature>
<feature type="glycosylation site" description="N-linked (GlcNAc...) asparagine" evidence="4">
    <location>
        <position position="120"/>
    </location>
</feature>
<feature type="glycosylation site" description="N-linked (GlcNAc...) asparagine" evidence="4">
    <location>
        <position position="741"/>
    </location>
</feature>
<feature type="disulfide bond" description="Interchain" evidence="5">
    <location>
        <position position="69"/>
    </location>
</feature>
<feature type="disulfide bond" description="Interchain" evidence="5">
    <location>
        <position position="72"/>
    </location>
</feature>
<feature type="disulfide bond" evidence="5">
    <location>
        <begin position="90"/>
        <end position="101"/>
    </location>
</feature>
<feature type="disulfide bond" evidence="5">
    <location>
        <begin position="95"/>
        <end position="110"/>
    </location>
</feature>
<feature type="disulfide bond" evidence="5">
    <location>
        <begin position="113"/>
        <end position="124"/>
    </location>
</feature>
<feature type="disulfide bond" evidence="5">
    <location>
        <begin position="130"/>
        <end position="141"/>
    </location>
</feature>
<feature type="disulfide bond" evidence="5">
    <location>
        <begin position="135"/>
        <end position="150"/>
    </location>
</feature>
<feature type="disulfide bond" evidence="5">
    <location>
        <begin position="183"/>
        <end position="196"/>
    </location>
</feature>
<feature type="disulfide bond" evidence="5">
    <location>
        <begin position="190"/>
        <end position="205"/>
    </location>
</feature>
<feature type="disulfide bond" evidence="5">
    <location>
        <begin position="228"/>
        <end position="242"/>
    </location>
</feature>
<feature type="disulfide bond" evidence="5">
    <location>
        <begin position="236"/>
        <end position="252"/>
    </location>
</feature>
<feature type="disulfide bond" evidence="5">
    <location>
        <begin position="254"/>
        <end position="265"/>
    </location>
</feature>
<feature type="sequence conflict" description="In Ref. 2; CAA52374." evidence="9" ref="2">
    <original>A</original>
    <variation>C</variation>
    <location>
        <position position="570"/>
    </location>
</feature>
<feature type="sequence conflict" description="In Ref. 2; CAA52374." evidence="9" ref="2">
    <original>T</original>
    <variation>P</variation>
    <location>
        <position position="584"/>
    </location>
</feature>
<feature type="sequence conflict" description="In Ref. 2; CAA52374." evidence="9" ref="2">
    <original>QD</original>
    <variation>HH</variation>
    <location>
        <begin position="603"/>
        <end position="604"/>
    </location>
</feature>
<name>COMP_BOVIN</name>
<organism>
    <name type="scientific">Bos taurus</name>
    <name type="common">Bovine</name>
    <dbReference type="NCBI Taxonomy" id="9913"/>
    <lineage>
        <taxon>Eukaryota</taxon>
        <taxon>Metazoa</taxon>
        <taxon>Chordata</taxon>
        <taxon>Craniata</taxon>
        <taxon>Vertebrata</taxon>
        <taxon>Euteleostomi</taxon>
        <taxon>Mammalia</taxon>
        <taxon>Eutheria</taxon>
        <taxon>Laurasiatheria</taxon>
        <taxon>Artiodactyla</taxon>
        <taxon>Ruminantia</taxon>
        <taxon>Pecora</taxon>
        <taxon>Bovidae</taxon>
        <taxon>Bovinae</taxon>
        <taxon>Bos</taxon>
    </lineage>
</organism>